<accession>P55203</accession>
<accession>O02809</accession>
<sequence>MTACTFLAGGLRDPGLCGPTRWAPSPPGLPPIPPRPRLRLRPPLLLLLLLPRSVLSAVFTVGVLGPWACDPIFARARPDLAARLAASRLNHAAALEGGPRFEVALLPEPCRTPGSLGAVSSALTRVSGLVGPVNPAACRPAELLAQEAGVALVPWGCPGTRAAGTTAPVVTPAADALYALLRAFRWAHVALVTAPQDLWVEAGHALSTALRARGLPVALVTSMEPSDLSGAREALRRVQDGPRVRAVIMVMHSVLLGGEEQRCLLEAAEELGLADGSLVFLPFDTLHYALSPGPDALAVLANSSQLRKAHDAVLTLTRHCPLGGSVRDSLRRAQEHRELPLDLNLQQVSPLFGTIYDSVFLLAGGVARARVAAGGGWVSGAAVARHIRDARVPGFCGALGGAEEPSFVLLDTDATGDQLFATYVLDPTQGFFHSAGTPVHFPKGGRGPGPDPSCWFDPDTICNGGVEPSVVFIGFLLVVGMGLAGAFLAHYCRHRLLHIQMVSGPNKIILTLDDITFLHPHGGNSRKVAQGSRTSLAARSISDVRSIHSQLPDYTNIGLYEGDWVWLKKFPGDRHIAIRPATKMAFSKIRELRHENVALYLGLFLAGGAGGPAAPGEGVLAVVSEHCARGSLQDLLAQRDIKLDWMFKSSLLLDLIKGIRYLHHRGVAHGRLKSRNCVVDGRFVLKVTDHGHGRLLEAQRVLPEPPSAEDQLWTAPELLRDPVLERRGTLAGDVFSLGIIMQEVVCRSAPYAMLELTPEEVVKRVQSPPPLCRPSVSIDQAPMECIQLMKQCWAEQPELRPSMDRTFELFKSINKGRKMNIIDSMLRMLEQYSSNLEDLIRERTEELELEKQKTDRLLTQMLPPSVAEALKMGTPVEPEYFEEVTLYFSDIVGFTTISAMSEPIEVVDLLNDLYTLFDAIIGSHDVYKVETIGDAYMVASGLPQRNGHRHAAEIANMALDILSAVGTFRMRHMPEVPVRIRIGLHSGPCVAGVVGLTMPRYCLFGDTVNTASAMESTGLPYRIHVNRSTVQILSALNEGFLTEVRGRTELKGKGAEETYWLVGRRGFNKPIPKPPDLQPGASNHGISLHEIPPDRRQKLEKARPGQFSGK</sequence>
<proteinExistence type="evidence at protein level"/>
<protein>
    <recommendedName>
        <fullName>Retinal guanylyl cyclase 1</fullName>
        <shortName>RETGC-1</shortName>
        <ecNumber evidence="8">4.6.1.2</ecNumber>
    </recommendedName>
    <alternativeName>
        <fullName>Guanylate cyclase 2D, retinal</fullName>
    </alternativeName>
    <alternativeName>
        <fullName>Guanylate cyclase E</fullName>
        <shortName>GC-E</shortName>
    </alternativeName>
    <alternativeName>
        <fullName evidence="9">Rod outer segment membrane guanylate cyclase</fullName>
        <shortName evidence="9">ROS-GC</shortName>
    </alternativeName>
</protein>
<organism>
    <name type="scientific">Bos taurus</name>
    <name type="common">Bovine</name>
    <dbReference type="NCBI Taxonomy" id="9913"/>
    <lineage>
        <taxon>Eukaryota</taxon>
        <taxon>Metazoa</taxon>
        <taxon>Chordata</taxon>
        <taxon>Craniata</taxon>
        <taxon>Vertebrata</taxon>
        <taxon>Euteleostomi</taxon>
        <taxon>Mammalia</taxon>
        <taxon>Eutheria</taxon>
        <taxon>Laurasiatheria</taxon>
        <taxon>Artiodactyla</taxon>
        <taxon>Ruminantia</taxon>
        <taxon>Pecora</taxon>
        <taxon>Bovidae</taxon>
        <taxon>Bovinae</taxon>
        <taxon>Bos</taxon>
    </lineage>
</organism>
<feature type="signal peptide" evidence="8">
    <location>
        <begin position="1"/>
        <end position="56"/>
    </location>
</feature>
<feature type="chain" id="PRO_0000012379" description="Retinal guanylyl cyclase 1">
    <location>
        <begin position="57"/>
        <end position="1110"/>
    </location>
</feature>
<feature type="topological domain" description="Extracellular" evidence="4">
    <location>
        <begin position="57"/>
        <end position="467"/>
    </location>
</feature>
<feature type="transmembrane region" description="Helical" evidence="4">
    <location>
        <begin position="468"/>
        <end position="492"/>
    </location>
</feature>
<feature type="topological domain" description="Cytoplasmic" evidence="4">
    <location>
        <begin position="493"/>
        <end position="1110"/>
    </location>
</feature>
<feature type="domain" description="Protein kinase" evidence="6">
    <location>
        <begin position="493"/>
        <end position="813"/>
    </location>
</feature>
<feature type="domain" description="Guanylate cyclase" evidence="5">
    <location>
        <begin position="885"/>
        <end position="1015"/>
    </location>
</feature>
<feature type="region of interest" description="Disordered" evidence="7">
    <location>
        <begin position="1070"/>
        <end position="1110"/>
    </location>
</feature>
<feature type="compositionally biased region" description="Basic and acidic residues" evidence="7">
    <location>
        <begin position="1091"/>
        <end position="1103"/>
    </location>
</feature>
<feature type="glycosylation site" description="N-linked (GlcNAc...) asparagine" evidence="4">
    <location>
        <position position="302"/>
    </location>
</feature>
<feature type="disulfide bond" description="Interchain" evidence="10">
    <location>
        <position position="454"/>
    </location>
</feature>
<feature type="disulfide bond" description="Interchain" evidence="10">
    <location>
        <position position="462"/>
    </location>
</feature>
<feature type="sequence conflict" description="In Ref. 3; AAC48734/AAD12319." evidence="10" ref="3">
    <original>G</original>
    <variation>A</variation>
    <location>
        <position position="18"/>
    </location>
</feature>
<feature type="sequence conflict" description="In Ref. 3; AAC48734/AAD12319." evidence="10" ref="3">
    <original>A</original>
    <variation>R</variation>
    <location>
        <position position="1013"/>
    </location>
</feature>
<keyword id="KW-0966">Cell projection</keyword>
<keyword id="KW-0141">cGMP biosynthesis</keyword>
<keyword id="KW-0903">Direct protein sequencing</keyword>
<keyword id="KW-1015">Disulfide bond</keyword>
<keyword id="KW-0256">Endoplasmic reticulum</keyword>
<keyword id="KW-0325">Glycoprotein</keyword>
<keyword id="KW-0342">GTP-binding</keyword>
<keyword id="KW-0456">Lyase</keyword>
<keyword id="KW-0472">Membrane</keyword>
<keyword id="KW-0547">Nucleotide-binding</keyword>
<keyword id="KW-1185">Reference proteome</keyword>
<keyword id="KW-0716">Sensory transduction</keyword>
<keyword id="KW-0732">Signal</keyword>
<keyword id="KW-0812">Transmembrane</keyword>
<keyword id="KW-1133">Transmembrane helix</keyword>
<keyword id="KW-0844">Vision</keyword>
<gene>
    <name type="primary">GUCY2D</name>
    <name type="synonym">GUC2D</name>
</gene>
<dbReference type="EC" id="4.6.1.2" evidence="8"/>
<dbReference type="EMBL" id="L37089">
    <property type="protein sequence ID" value="AAA50790.1"/>
    <property type="molecule type" value="mRNA"/>
</dbReference>
<dbReference type="EMBL" id="AF027203">
    <property type="protein sequence ID" value="AAB86385.1"/>
    <property type="molecule type" value="Genomic_DNA"/>
</dbReference>
<dbReference type="EMBL" id="AF027200">
    <property type="protein sequence ID" value="AAB86385.1"/>
    <property type="status" value="JOINED"/>
    <property type="molecule type" value="Genomic_DNA"/>
</dbReference>
<dbReference type="EMBL" id="AF027201">
    <property type="protein sequence ID" value="AAB86385.1"/>
    <property type="status" value="JOINED"/>
    <property type="molecule type" value="Genomic_DNA"/>
</dbReference>
<dbReference type="EMBL" id="AF027202">
    <property type="protein sequence ID" value="AAB86385.1"/>
    <property type="status" value="JOINED"/>
    <property type="molecule type" value="Genomic_DNA"/>
</dbReference>
<dbReference type="EMBL" id="U77095">
    <property type="protein sequence ID" value="AAC48734.1"/>
    <property type="molecule type" value="mRNA"/>
</dbReference>
<dbReference type="EMBL" id="U77103">
    <property type="protein sequence ID" value="AAD12319.1"/>
    <property type="molecule type" value="Genomic_DNA"/>
</dbReference>
<dbReference type="EMBL" id="U77096">
    <property type="protein sequence ID" value="AAD12319.1"/>
    <property type="status" value="JOINED"/>
    <property type="molecule type" value="Genomic_DNA"/>
</dbReference>
<dbReference type="EMBL" id="U77097">
    <property type="protein sequence ID" value="AAD12319.1"/>
    <property type="status" value="JOINED"/>
    <property type="molecule type" value="Genomic_DNA"/>
</dbReference>
<dbReference type="EMBL" id="U77098">
    <property type="protein sequence ID" value="AAD12319.1"/>
    <property type="status" value="JOINED"/>
    <property type="molecule type" value="Genomic_DNA"/>
</dbReference>
<dbReference type="EMBL" id="U77099">
    <property type="protein sequence ID" value="AAD12319.1"/>
    <property type="status" value="JOINED"/>
    <property type="molecule type" value="Genomic_DNA"/>
</dbReference>
<dbReference type="EMBL" id="U77100">
    <property type="protein sequence ID" value="AAD12319.1"/>
    <property type="status" value="JOINED"/>
    <property type="molecule type" value="Genomic_DNA"/>
</dbReference>
<dbReference type="EMBL" id="U77101">
    <property type="protein sequence ID" value="AAD12319.1"/>
    <property type="status" value="JOINED"/>
    <property type="molecule type" value="Genomic_DNA"/>
</dbReference>
<dbReference type="EMBL" id="U77102">
    <property type="protein sequence ID" value="AAD12319.1"/>
    <property type="status" value="JOINED"/>
    <property type="molecule type" value="Genomic_DNA"/>
</dbReference>
<dbReference type="PIR" id="S55279">
    <property type="entry name" value="S55279"/>
</dbReference>
<dbReference type="SMR" id="P55203"/>
<dbReference type="FunCoup" id="P55203">
    <property type="interactions" value="72"/>
</dbReference>
<dbReference type="IntAct" id="P55203">
    <property type="interactions" value="2"/>
</dbReference>
<dbReference type="MINT" id="P55203"/>
<dbReference type="STRING" id="9913.ENSBTAP00000011564"/>
<dbReference type="GlyCosmos" id="P55203">
    <property type="glycosylation" value="1 site, No reported glycans"/>
</dbReference>
<dbReference type="GlyGen" id="P55203">
    <property type="glycosylation" value="1 site"/>
</dbReference>
<dbReference type="PaxDb" id="9913-ENSBTAP00000011564"/>
<dbReference type="eggNOG" id="KOG1023">
    <property type="taxonomic scope" value="Eukaryota"/>
</dbReference>
<dbReference type="InParanoid" id="P55203"/>
<dbReference type="OrthoDB" id="1890790at2759"/>
<dbReference type="BRENDA" id="4.6.1.2">
    <property type="organism ID" value="908"/>
</dbReference>
<dbReference type="Proteomes" id="UP000009136">
    <property type="component" value="Unplaced"/>
</dbReference>
<dbReference type="GO" id="GO:0005789">
    <property type="term" value="C:endoplasmic reticulum membrane"/>
    <property type="evidence" value="ECO:0000250"/>
    <property type="project" value="UniProtKB"/>
</dbReference>
<dbReference type="GO" id="GO:0005886">
    <property type="term" value="C:plasma membrane"/>
    <property type="evidence" value="ECO:0000250"/>
    <property type="project" value="UniProtKB"/>
</dbReference>
<dbReference type="GO" id="GO:0120200">
    <property type="term" value="C:rod photoreceptor outer segment"/>
    <property type="evidence" value="ECO:0000314"/>
    <property type="project" value="UniProtKB"/>
</dbReference>
<dbReference type="GO" id="GO:0005524">
    <property type="term" value="F:ATP binding"/>
    <property type="evidence" value="ECO:0007669"/>
    <property type="project" value="InterPro"/>
</dbReference>
<dbReference type="GO" id="GO:0005525">
    <property type="term" value="F:GTP binding"/>
    <property type="evidence" value="ECO:0007669"/>
    <property type="project" value="UniProtKB-KW"/>
</dbReference>
<dbReference type="GO" id="GO:0004383">
    <property type="term" value="F:guanylate cyclase activity"/>
    <property type="evidence" value="ECO:0000314"/>
    <property type="project" value="UniProtKB"/>
</dbReference>
<dbReference type="GO" id="GO:0001653">
    <property type="term" value="F:peptide receptor activity"/>
    <property type="evidence" value="ECO:0000318"/>
    <property type="project" value="GO_Central"/>
</dbReference>
<dbReference type="GO" id="GO:0042803">
    <property type="term" value="F:protein homodimerization activity"/>
    <property type="evidence" value="ECO:0000250"/>
    <property type="project" value="UniProtKB"/>
</dbReference>
<dbReference type="GO" id="GO:0004672">
    <property type="term" value="F:protein kinase activity"/>
    <property type="evidence" value="ECO:0007669"/>
    <property type="project" value="InterPro"/>
</dbReference>
<dbReference type="GO" id="GO:0006182">
    <property type="term" value="P:cGMP biosynthetic process"/>
    <property type="evidence" value="ECO:0000318"/>
    <property type="project" value="GO_Central"/>
</dbReference>
<dbReference type="GO" id="GO:0035556">
    <property type="term" value="P:intracellular signal transduction"/>
    <property type="evidence" value="ECO:0007669"/>
    <property type="project" value="InterPro"/>
</dbReference>
<dbReference type="GO" id="GO:0007168">
    <property type="term" value="P:receptor guanylyl cyclase signaling pathway"/>
    <property type="evidence" value="ECO:0000318"/>
    <property type="project" value="GO_Central"/>
</dbReference>
<dbReference type="GO" id="GO:0007601">
    <property type="term" value="P:visual perception"/>
    <property type="evidence" value="ECO:0007669"/>
    <property type="project" value="UniProtKB-KW"/>
</dbReference>
<dbReference type="CDD" id="cd07302">
    <property type="entry name" value="CHD"/>
    <property type="match status" value="1"/>
</dbReference>
<dbReference type="CDD" id="cd06371">
    <property type="entry name" value="PBP1_sensory_GC_DEF-like"/>
    <property type="match status" value="1"/>
</dbReference>
<dbReference type="CDD" id="cd14043">
    <property type="entry name" value="PK_GC-2D"/>
    <property type="match status" value="1"/>
</dbReference>
<dbReference type="FunFam" id="1.10.510.10:FF:000507">
    <property type="entry name" value="Guanylate cyclase"/>
    <property type="match status" value="1"/>
</dbReference>
<dbReference type="FunFam" id="3.30.70.1230:FF:000013">
    <property type="entry name" value="Guanylate cyclase"/>
    <property type="match status" value="1"/>
</dbReference>
<dbReference type="FunFam" id="3.40.50.2300:FF:000114">
    <property type="entry name" value="Guanylate cyclase"/>
    <property type="match status" value="1"/>
</dbReference>
<dbReference type="Gene3D" id="3.40.50.2300">
    <property type="match status" value="1"/>
</dbReference>
<dbReference type="Gene3D" id="3.30.70.1230">
    <property type="entry name" value="Nucleotide cyclase"/>
    <property type="match status" value="1"/>
</dbReference>
<dbReference type="Gene3D" id="1.10.510.10">
    <property type="entry name" value="Transferase(Phosphotransferase) domain 1"/>
    <property type="match status" value="1"/>
</dbReference>
<dbReference type="InterPro" id="IPR001054">
    <property type="entry name" value="A/G_cyclase"/>
</dbReference>
<dbReference type="InterPro" id="IPR018297">
    <property type="entry name" value="A/G_cyclase_CS"/>
</dbReference>
<dbReference type="InterPro" id="IPR001828">
    <property type="entry name" value="ANF_lig-bd_rcpt"/>
</dbReference>
<dbReference type="InterPro" id="IPR050401">
    <property type="entry name" value="Cyclic_nucleotide_synthase"/>
</dbReference>
<dbReference type="InterPro" id="IPR011645">
    <property type="entry name" value="HNOB_dom_associated"/>
</dbReference>
<dbReference type="InterPro" id="IPR011009">
    <property type="entry name" value="Kinase-like_dom_sf"/>
</dbReference>
<dbReference type="InterPro" id="IPR029787">
    <property type="entry name" value="Nucleotide_cyclase"/>
</dbReference>
<dbReference type="InterPro" id="IPR028082">
    <property type="entry name" value="Peripla_BP_I"/>
</dbReference>
<dbReference type="InterPro" id="IPR000719">
    <property type="entry name" value="Prot_kinase_dom"/>
</dbReference>
<dbReference type="InterPro" id="IPR001245">
    <property type="entry name" value="Ser-Thr/Tyr_kinase_cat_dom"/>
</dbReference>
<dbReference type="PANTHER" id="PTHR11920">
    <property type="entry name" value="GUANYLYL CYCLASE"/>
    <property type="match status" value="1"/>
</dbReference>
<dbReference type="PANTHER" id="PTHR11920:SF228">
    <property type="entry name" value="RETINAL GUANYLYL CYCLASE 1"/>
    <property type="match status" value="1"/>
</dbReference>
<dbReference type="Pfam" id="PF01094">
    <property type="entry name" value="ANF_receptor"/>
    <property type="match status" value="1"/>
</dbReference>
<dbReference type="Pfam" id="PF00211">
    <property type="entry name" value="Guanylate_cyc"/>
    <property type="match status" value="1"/>
</dbReference>
<dbReference type="Pfam" id="PF07701">
    <property type="entry name" value="HNOBA"/>
    <property type="match status" value="1"/>
</dbReference>
<dbReference type="Pfam" id="PF07714">
    <property type="entry name" value="PK_Tyr_Ser-Thr"/>
    <property type="match status" value="1"/>
</dbReference>
<dbReference type="SMART" id="SM00044">
    <property type="entry name" value="CYCc"/>
    <property type="match status" value="1"/>
</dbReference>
<dbReference type="SUPFAM" id="SSF55073">
    <property type="entry name" value="Nucleotide cyclase"/>
    <property type="match status" value="1"/>
</dbReference>
<dbReference type="SUPFAM" id="SSF53822">
    <property type="entry name" value="Periplasmic binding protein-like I"/>
    <property type="match status" value="1"/>
</dbReference>
<dbReference type="SUPFAM" id="SSF56112">
    <property type="entry name" value="Protein kinase-like (PK-like)"/>
    <property type="match status" value="1"/>
</dbReference>
<dbReference type="PROSITE" id="PS00452">
    <property type="entry name" value="GUANYLATE_CYCLASE_1"/>
    <property type="match status" value="1"/>
</dbReference>
<dbReference type="PROSITE" id="PS50125">
    <property type="entry name" value="GUANYLATE_CYCLASE_2"/>
    <property type="match status" value="1"/>
</dbReference>
<dbReference type="PROSITE" id="PS50011">
    <property type="entry name" value="PROTEIN_KINASE_DOM"/>
    <property type="match status" value="1"/>
</dbReference>
<evidence type="ECO:0000250" key="1">
    <source>
        <dbReference type="UniProtKB" id="P51840"/>
    </source>
</evidence>
<evidence type="ECO:0000250" key="2">
    <source>
        <dbReference type="UniProtKB" id="P52785"/>
    </source>
</evidence>
<evidence type="ECO:0000250" key="3">
    <source>
        <dbReference type="UniProtKB" id="Q02846"/>
    </source>
</evidence>
<evidence type="ECO:0000255" key="4"/>
<evidence type="ECO:0000255" key="5">
    <source>
        <dbReference type="PROSITE-ProRule" id="PRU00099"/>
    </source>
</evidence>
<evidence type="ECO:0000255" key="6">
    <source>
        <dbReference type="PROSITE-ProRule" id="PRU00159"/>
    </source>
</evidence>
<evidence type="ECO:0000256" key="7">
    <source>
        <dbReference type="SAM" id="MobiDB-lite"/>
    </source>
</evidence>
<evidence type="ECO:0000269" key="8">
    <source>
    </source>
</evidence>
<evidence type="ECO:0000303" key="9">
    <source>
    </source>
</evidence>
<evidence type="ECO:0000305" key="10"/>
<name>GUC2D_BOVIN</name>
<reference key="1">
    <citation type="journal article" date="1994" name="Biochem. J.">
        <title>Structural and functional characterization of the rod outer segment membrane guanylate cyclase.</title>
        <authorList>
            <person name="Goraczniak R.M."/>
            <person name="Duda T."/>
            <person name="Sitaramayya A."/>
            <person name="Sharma R.K."/>
        </authorList>
    </citation>
    <scope>NUCLEOTIDE SEQUENCE [MRNA]</scope>
    <source>
        <tissue>Retina</tissue>
    </source>
</reference>
<reference key="2">
    <citation type="submission" date="1997-11" db="EMBL/GenBank/DDBJ databases">
        <authorList>
            <person name="Duda T."/>
            <person name="Venkataraman V."/>
            <person name="Sharma R.K."/>
        </authorList>
    </citation>
    <scope>NUCLEOTIDE SEQUENCE</scope>
</reference>
<reference key="3">
    <citation type="journal article" date="1997" name="Gene">
        <title>The bovine guanylate cyclase GC-E gene and 5' flanking region.</title>
        <authorList>
            <person name="Johnston J.P."/>
            <person name="Farhangfar F."/>
            <person name="Aparicio J.G."/>
            <person name="Nam S.H."/>
            <person name="Applebury M.L."/>
        </authorList>
    </citation>
    <scope>NUCLEOTIDE SEQUENCE [GENOMIC DNA / MRNA]</scope>
    <source>
        <strain>Holstein</strain>
        <tissue>Retina</tissue>
    </source>
</reference>
<reference key="4">
    <citation type="journal article" date="1993" name="Biochem. Biophys. Res. Commun.">
        <title>Structural and biochemical identity of retinal rod outer segment membrane guanylate cyclase.</title>
        <authorList>
            <person name="Margulis A."/>
            <person name="Goraczniak R.M."/>
            <person name="Duda T."/>
            <person name="Sharma R.K."/>
            <person name="Sitaramayya A."/>
        </authorList>
    </citation>
    <scope>PROTEIN SEQUENCE OF 57-71; 163-178; 702-713 AND 749-763</scope>
    <scope>TISSUE SPECIFICITY</scope>
    <scope>CATALYTIC ACTIVITY</scope>
    <scope>SUBCELLULAR LOCATION</scope>
    <scope>FUNCTION</scope>
    <source>
        <tissue>Retina</tissue>
    </source>
</reference>
<comment type="function">
    <text evidence="2 8">Catalyzes the synthesis of cyclic GMP (cGMP) in rods and cones of photoreceptors. Plays an essential role in phototransduction, by mediating cGMP replenishment (PubMed:8102054). May also participate in the trafficking of membrane-asociated proteins to the photoreceptor outer segment membrane (By similarity).</text>
</comment>
<comment type="catalytic activity">
    <reaction evidence="8">
        <text>GTP = 3',5'-cyclic GMP + diphosphate</text>
        <dbReference type="Rhea" id="RHEA:13665"/>
        <dbReference type="ChEBI" id="CHEBI:33019"/>
        <dbReference type="ChEBI" id="CHEBI:37565"/>
        <dbReference type="ChEBI" id="CHEBI:57746"/>
        <dbReference type="EC" id="4.6.1.2"/>
    </reaction>
</comment>
<comment type="activity regulation">
    <text evidence="2 3">Activated by GUCA1A when free calcium ions concentration is low, and inhibited by GUCA1A when free calcium ions concentration is high (By similarity). Negatively regulated by RD3; inhibits the basal and GUCA1A-stimulated guanylate cyclase activity (By similarity).</text>
</comment>
<comment type="subunit">
    <text evidence="1 3">Homodimer; requires homodimerization for guanylyl cyclase activity (By similarity). Interacts (via C-terminus) with RD3 (via C-terminus); promotes the exit of GUCY2D from the endoplasmic reticulum and its trafficking to the photoreceptor outer segments (By similarity). Interaction with RD3 negatively regulates GUCY2D guanylate cyclase activity (By similarity).</text>
</comment>
<comment type="interaction">
    <interactant intactId="EBI-6943076">
        <id>P55203</id>
    </interactant>
    <interactant intactId="EBI-6979031">
        <id>Q28181</id>
        <label>CNGB1</label>
    </interactant>
    <organismsDiffer>false</organismsDiffer>
    <experiments>5</experiments>
</comment>
<comment type="interaction">
    <interactant intactId="EBI-6943076">
        <id>P55203</id>
    </interactant>
    <interactant intactId="EBI-6943108">
        <id>P46065</id>
        <label>GUCA1A</label>
    </interactant>
    <organismsDiffer>false</organismsDiffer>
    <experiments>2</experiments>
</comment>
<comment type="subcellular location">
    <subcellularLocation>
        <location evidence="8">Photoreceptor outer segment membrane</location>
        <topology evidence="4">Single-pass type I membrane protein</topology>
    </subcellularLocation>
    <subcellularLocation>
        <location evidence="3">Endoplasmic reticulum membrane</location>
        <topology evidence="4">Single-pass type I membrane protein</topology>
    </subcellularLocation>
</comment>
<comment type="tissue specificity">
    <text evidence="8">Expressed in the retina in rod outer segment.</text>
</comment>
<comment type="similarity">
    <text evidence="5">Belongs to the adenylyl cyclase class-4/guanylyl cyclase family.</text>
</comment>